<reference key="1">
    <citation type="journal article" date="1994" name="Biochem. Biophys. Res. Commun.">
        <title>BR140, a novel zinc-finger protein with homology to the TAF250 subunit of TFIID.</title>
        <authorList>
            <person name="Thompson K.A."/>
            <person name="Wang B."/>
            <person name="Argraves W.S."/>
            <person name="Giancotti F.G."/>
            <person name="Schranck D.P."/>
            <person name="Ruoslahti E."/>
        </authorList>
    </citation>
    <scope>NUCLEOTIDE SEQUENCE [MRNA] (ISOFORM 1)</scope>
    <scope>TISSUE SPECIFICITY</scope>
</reference>
<reference key="2">
    <citation type="submission" date="1999-08" db="EMBL/GenBank/DDBJ databases">
        <title>Sequencing and analyzing of BAC DNA on 3p26.</title>
        <authorList>
            <person name="Hu S.N."/>
            <person name="Dong W."/>
            <person name="Zeng Y.X."/>
            <person name="Yu J."/>
            <person name="Yang H.M."/>
        </authorList>
    </citation>
    <scope>NUCLEOTIDE SEQUENCE [GENOMIC DNA]</scope>
</reference>
<reference key="3">
    <citation type="journal article" date="2004" name="Nat. Genet.">
        <title>Complete sequencing and characterization of 21,243 full-length human cDNAs.</title>
        <authorList>
            <person name="Ota T."/>
            <person name="Suzuki Y."/>
            <person name="Nishikawa T."/>
            <person name="Otsuki T."/>
            <person name="Sugiyama T."/>
            <person name="Irie R."/>
            <person name="Wakamatsu A."/>
            <person name="Hayashi K."/>
            <person name="Sato H."/>
            <person name="Nagai K."/>
            <person name="Kimura K."/>
            <person name="Makita H."/>
            <person name="Sekine M."/>
            <person name="Obayashi M."/>
            <person name="Nishi T."/>
            <person name="Shibahara T."/>
            <person name="Tanaka T."/>
            <person name="Ishii S."/>
            <person name="Yamamoto J."/>
            <person name="Saito K."/>
            <person name="Kawai Y."/>
            <person name="Isono Y."/>
            <person name="Nakamura Y."/>
            <person name="Nagahari K."/>
            <person name="Murakami K."/>
            <person name="Yasuda T."/>
            <person name="Iwayanagi T."/>
            <person name="Wagatsuma M."/>
            <person name="Shiratori A."/>
            <person name="Sudo H."/>
            <person name="Hosoiri T."/>
            <person name="Kaku Y."/>
            <person name="Kodaira H."/>
            <person name="Kondo H."/>
            <person name="Sugawara M."/>
            <person name="Takahashi M."/>
            <person name="Kanda K."/>
            <person name="Yokoi T."/>
            <person name="Furuya T."/>
            <person name="Kikkawa E."/>
            <person name="Omura Y."/>
            <person name="Abe K."/>
            <person name="Kamihara K."/>
            <person name="Katsuta N."/>
            <person name="Sato K."/>
            <person name="Tanikawa M."/>
            <person name="Yamazaki M."/>
            <person name="Ninomiya K."/>
            <person name="Ishibashi T."/>
            <person name="Yamashita H."/>
            <person name="Murakawa K."/>
            <person name="Fujimori K."/>
            <person name="Tanai H."/>
            <person name="Kimata M."/>
            <person name="Watanabe M."/>
            <person name="Hiraoka S."/>
            <person name="Chiba Y."/>
            <person name="Ishida S."/>
            <person name="Ono Y."/>
            <person name="Takiguchi S."/>
            <person name="Watanabe S."/>
            <person name="Yosida M."/>
            <person name="Hotuta T."/>
            <person name="Kusano J."/>
            <person name="Kanehori K."/>
            <person name="Takahashi-Fujii A."/>
            <person name="Hara H."/>
            <person name="Tanase T.-O."/>
            <person name="Nomura Y."/>
            <person name="Togiya S."/>
            <person name="Komai F."/>
            <person name="Hara R."/>
            <person name="Takeuchi K."/>
            <person name="Arita M."/>
            <person name="Imose N."/>
            <person name="Musashino K."/>
            <person name="Yuuki H."/>
            <person name="Oshima A."/>
            <person name="Sasaki N."/>
            <person name="Aotsuka S."/>
            <person name="Yoshikawa Y."/>
            <person name="Matsunawa H."/>
            <person name="Ichihara T."/>
            <person name="Shiohata N."/>
            <person name="Sano S."/>
            <person name="Moriya S."/>
            <person name="Momiyama H."/>
            <person name="Satoh N."/>
            <person name="Takami S."/>
            <person name="Terashima Y."/>
            <person name="Suzuki O."/>
            <person name="Nakagawa S."/>
            <person name="Senoh A."/>
            <person name="Mizoguchi H."/>
            <person name="Goto Y."/>
            <person name="Shimizu F."/>
            <person name="Wakebe H."/>
            <person name="Hishigaki H."/>
            <person name="Watanabe T."/>
            <person name="Sugiyama A."/>
            <person name="Takemoto M."/>
            <person name="Kawakami B."/>
            <person name="Yamazaki M."/>
            <person name="Watanabe K."/>
            <person name="Kumagai A."/>
            <person name="Itakura S."/>
            <person name="Fukuzumi Y."/>
            <person name="Fujimori Y."/>
            <person name="Komiyama M."/>
            <person name="Tashiro H."/>
            <person name="Tanigami A."/>
            <person name="Fujiwara T."/>
            <person name="Ono T."/>
            <person name="Yamada K."/>
            <person name="Fujii Y."/>
            <person name="Ozaki K."/>
            <person name="Hirao M."/>
            <person name="Ohmori Y."/>
            <person name="Kawabata A."/>
            <person name="Hikiji T."/>
            <person name="Kobatake N."/>
            <person name="Inagaki H."/>
            <person name="Ikema Y."/>
            <person name="Okamoto S."/>
            <person name="Okitani R."/>
            <person name="Kawakami T."/>
            <person name="Noguchi S."/>
            <person name="Itoh T."/>
            <person name="Shigeta K."/>
            <person name="Senba T."/>
            <person name="Matsumura K."/>
            <person name="Nakajima Y."/>
            <person name="Mizuno T."/>
            <person name="Morinaga M."/>
            <person name="Sasaki M."/>
            <person name="Togashi T."/>
            <person name="Oyama M."/>
            <person name="Hata H."/>
            <person name="Watanabe M."/>
            <person name="Komatsu T."/>
            <person name="Mizushima-Sugano J."/>
            <person name="Satoh T."/>
            <person name="Shirai Y."/>
            <person name="Takahashi Y."/>
            <person name="Nakagawa K."/>
            <person name="Okumura K."/>
            <person name="Nagase T."/>
            <person name="Nomura N."/>
            <person name="Kikuchi H."/>
            <person name="Masuho Y."/>
            <person name="Yamashita R."/>
            <person name="Nakai K."/>
            <person name="Yada T."/>
            <person name="Nakamura Y."/>
            <person name="Ohara O."/>
            <person name="Isogai T."/>
            <person name="Sugano S."/>
        </authorList>
    </citation>
    <scope>NUCLEOTIDE SEQUENCE [LARGE SCALE MRNA] (ISOFORM 4)</scope>
    <source>
        <tissue>Cerebellum</tissue>
    </source>
</reference>
<reference key="4">
    <citation type="journal article" date="2007" name="BMC Genomics">
        <title>The full-ORF clone resource of the German cDNA consortium.</title>
        <authorList>
            <person name="Bechtel S."/>
            <person name="Rosenfelder H."/>
            <person name="Duda A."/>
            <person name="Schmidt C.P."/>
            <person name="Ernst U."/>
            <person name="Wellenreuther R."/>
            <person name="Mehrle A."/>
            <person name="Schuster C."/>
            <person name="Bahr A."/>
            <person name="Bloecker H."/>
            <person name="Heubner D."/>
            <person name="Hoerlein A."/>
            <person name="Michel G."/>
            <person name="Wedler H."/>
            <person name="Koehrer K."/>
            <person name="Ottenwaelder B."/>
            <person name="Poustka A."/>
            <person name="Wiemann S."/>
            <person name="Schupp I."/>
        </authorList>
    </citation>
    <scope>NUCLEOTIDE SEQUENCE [LARGE SCALE MRNA] (ISOFORM 3)</scope>
    <source>
        <tissue>Brain</tissue>
    </source>
</reference>
<reference key="5">
    <citation type="journal article" date="2006" name="Nature">
        <title>The DNA sequence, annotation and analysis of human chromosome 3.</title>
        <authorList>
            <person name="Muzny D.M."/>
            <person name="Scherer S.E."/>
            <person name="Kaul R."/>
            <person name="Wang J."/>
            <person name="Yu J."/>
            <person name="Sudbrak R."/>
            <person name="Buhay C.J."/>
            <person name="Chen R."/>
            <person name="Cree A."/>
            <person name="Ding Y."/>
            <person name="Dugan-Rocha S."/>
            <person name="Gill R."/>
            <person name="Gunaratne P."/>
            <person name="Harris R.A."/>
            <person name="Hawes A.C."/>
            <person name="Hernandez J."/>
            <person name="Hodgson A.V."/>
            <person name="Hume J."/>
            <person name="Jackson A."/>
            <person name="Khan Z.M."/>
            <person name="Kovar-Smith C."/>
            <person name="Lewis L.R."/>
            <person name="Lozado R.J."/>
            <person name="Metzker M.L."/>
            <person name="Milosavljevic A."/>
            <person name="Miner G.R."/>
            <person name="Morgan M.B."/>
            <person name="Nazareth L.V."/>
            <person name="Scott G."/>
            <person name="Sodergren E."/>
            <person name="Song X.-Z."/>
            <person name="Steffen D."/>
            <person name="Wei S."/>
            <person name="Wheeler D.A."/>
            <person name="Wright M.W."/>
            <person name="Worley K.C."/>
            <person name="Yuan Y."/>
            <person name="Zhang Z."/>
            <person name="Adams C.Q."/>
            <person name="Ansari-Lari M.A."/>
            <person name="Ayele M."/>
            <person name="Brown M.J."/>
            <person name="Chen G."/>
            <person name="Chen Z."/>
            <person name="Clendenning J."/>
            <person name="Clerc-Blankenburg K.P."/>
            <person name="Chen R."/>
            <person name="Chen Z."/>
            <person name="Davis C."/>
            <person name="Delgado O."/>
            <person name="Dinh H.H."/>
            <person name="Dong W."/>
            <person name="Draper H."/>
            <person name="Ernst S."/>
            <person name="Fu G."/>
            <person name="Gonzalez-Garay M.L."/>
            <person name="Garcia D.K."/>
            <person name="Gillett W."/>
            <person name="Gu J."/>
            <person name="Hao B."/>
            <person name="Haugen E."/>
            <person name="Havlak P."/>
            <person name="He X."/>
            <person name="Hennig S."/>
            <person name="Hu S."/>
            <person name="Huang W."/>
            <person name="Jackson L.R."/>
            <person name="Jacob L.S."/>
            <person name="Kelly S.H."/>
            <person name="Kube M."/>
            <person name="Levy R."/>
            <person name="Li Z."/>
            <person name="Liu B."/>
            <person name="Liu J."/>
            <person name="Liu W."/>
            <person name="Lu J."/>
            <person name="Maheshwari M."/>
            <person name="Nguyen B.-V."/>
            <person name="Okwuonu G.O."/>
            <person name="Palmeiri A."/>
            <person name="Pasternak S."/>
            <person name="Perez L.M."/>
            <person name="Phelps K.A."/>
            <person name="Plopper F.J."/>
            <person name="Qiang B."/>
            <person name="Raymond C."/>
            <person name="Rodriguez R."/>
            <person name="Saenphimmachak C."/>
            <person name="Santibanez J."/>
            <person name="Shen H."/>
            <person name="Shen Y."/>
            <person name="Subramanian S."/>
            <person name="Tabor P.E."/>
            <person name="Verduzco D."/>
            <person name="Waldron L."/>
            <person name="Wang J."/>
            <person name="Wang J."/>
            <person name="Wang Q."/>
            <person name="Williams G.A."/>
            <person name="Wong G.K.-S."/>
            <person name="Yao Z."/>
            <person name="Zhang J."/>
            <person name="Zhang X."/>
            <person name="Zhao G."/>
            <person name="Zhou J."/>
            <person name="Zhou Y."/>
            <person name="Nelson D."/>
            <person name="Lehrach H."/>
            <person name="Reinhardt R."/>
            <person name="Naylor S.L."/>
            <person name="Yang H."/>
            <person name="Olson M."/>
            <person name="Weinstock G."/>
            <person name="Gibbs R.A."/>
        </authorList>
    </citation>
    <scope>NUCLEOTIDE SEQUENCE [LARGE SCALE GENOMIC DNA]</scope>
</reference>
<reference key="6">
    <citation type="submission" date="2005-07" db="EMBL/GenBank/DDBJ databases">
        <authorList>
            <person name="Mural R.J."/>
            <person name="Istrail S."/>
            <person name="Sutton G.G."/>
            <person name="Florea L."/>
            <person name="Halpern A.L."/>
            <person name="Mobarry C.M."/>
            <person name="Lippert R."/>
            <person name="Walenz B."/>
            <person name="Shatkay H."/>
            <person name="Dew I."/>
            <person name="Miller J.R."/>
            <person name="Flanigan M.J."/>
            <person name="Edwards N.J."/>
            <person name="Bolanos R."/>
            <person name="Fasulo D."/>
            <person name="Halldorsson B.V."/>
            <person name="Hannenhalli S."/>
            <person name="Turner R."/>
            <person name="Yooseph S."/>
            <person name="Lu F."/>
            <person name="Nusskern D.R."/>
            <person name="Shue B.C."/>
            <person name="Zheng X.H."/>
            <person name="Zhong F."/>
            <person name="Delcher A.L."/>
            <person name="Huson D.H."/>
            <person name="Kravitz S.A."/>
            <person name="Mouchard L."/>
            <person name="Reinert K."/>
            <person name="Remington K.A."/>
            <person name="Clark A.G."/>
            <person name="Waterman M.S."/>
            <person name="Eichler E.E."/>
            <person name="Adams M.D."/>
            <person name="Hunkapiller M.W."/>
            <person name="Myers E.W."/>
            <person name="Venter J.C."/>
        </authorList>
    </citation>
    <scope>NUCLEOTIDE SEQUENCE [LARGE SCALE GENOMIC DNA]</scope>
</reference>
<reference key="7">
    <citation type="journal article" date="2004" name="Genome Res.">
        <title>The status, quality, and expansion of the NIH full-length cDNA project: the Mammalian Gene Collection (MGC).</title>
        <authorList>
            <consortium name="The MGC Project Team"/>
        </authorList>
    </citation>
    <scope>NUCLEOTIDE SEQUENCE [LARGE SCALE MRNA] (ISOFORM 2)</scope>
    <source>
        <tissue>Eye</tissue>
    </source>
</reference>
<reference key="8">
    <citation type="journal article" date="2006" name="Cell">
        <title>Global, in vivo, and site-specific phosphorylation dynamics in signaling networks.</title>
        <authorList>
            <person name="Olsen J.V."/>
            <person name="Blagoev B."/>
            <person name="Gnad F."/>
            <person name="Macek B."/>
            <person name="Kumar C."/>
            <person name="Mortensen P."/>
            <person name="Mann M."/>
        </authorList>
    </citation>
    <scope>PHOSPHORYLATION [LARGE SCALE ANALYSIS] AT SER-460 AND SER-462</scope>
    <scope>IDENTIFICATION BY MASS SPECTROMETRY [LARGE SCALE ANALYSIS]</scope>
    <source>
        <tissue>Cervix carcinoma</tissue>
    </source>
</reference>
<reference key="9">
    <citation type="journal article" date="2006" name="Mol. Cell">
        <title>ING tumor suppressor proteins are critical regulators of chromatin acetylation required for genome expression and perpetuation.</title>
        <authorList>
            <person name="Doyon Y."/>
            <person name="Cayrou C."/>
            <person name="Ullah M."/>
            <person name="Landry A.-J."/>
            <person name="Cote V."/>
            <person name="Selleck W."/>
            <person name="Lane W.S."/>
            <person name="Tan S."/>
            <person name="Yang X.-J."/>
            <person name="Cote J."/>
        </authorList>
    </citation>
    <scope>FUNCTION</scope>
    <scope>IDENTIFICATION IN THE MOZ/MORF COMPLEX</scope>
</reference>
<reference key="10">
    <citation type="journal article" date="2008" name="Mol. Cell. Biol.">
        <title>Molecular architecture of quartet MOZ/MORF histone acetyltransferase complexes.</title>
        <authorList>
            <person name="Ullah M."/>
            <person name="Pelletier N."/>
            <person name="Xiao L."/>
            <person name="Zhao S.P."/>
            <person name="Wang K."/>
            <person name="Degerny C."/>
            <person name="Tahmasebi S."/>
            <person name="Cayrou C."/>
            <person name="Doyon Y."/>
            <person name="Goh S.-L."/>
            <person name="Champagne N."/>
            <person name="Cote J."/>
            <person name="Yang X.-J."/>
        </authorList>
    </citation>
    <scope>FUNCTION</scope>
    <scope>IDENTIFICATION IN THE MOZ/MORF COMPLEX</scope>
    <scope>INTERACTION WITH ING5; MEAF6; KAT6A AND KAT6B</scope>
    <scope>SUBCELLULAR LOCATION</scope>
    <scope>ACETYLATION</scope>
</reference>
<reference key="11">
    <citation type="journal article" date="2008" name="Proc. Natl. Acad. Sci. U.S.A.">
        <title>A quantitative atlas of mitotic phosphorylation.</title>
        <authorList>
            <person name="Dephoure N."/>
            <person name="Zhou C."/>
            <person name="Villen J."/>
            <person name="Beausoleil S.A."/>
            <person name="Bakalarski C.E."/>
            <person name="Elledge S.J."/>
            <person name="Gygi S.P."/>
        </authorList>
    </citation>
    <scope>PHOSPHORYLATION [LARGE SCALE ANALYSIS] AT SER-120 AND SER-1187</scope>
    <scope>IDENTIFICATION BY MASS SPECTROMETRY [LARGE SCALE ANALYSIS]</scope>
    <source>
        <tissue>Cervix carcinoma</tissue>
    </source>
</reference>
<reference key="12">
    <citation type="journal article" date="2009" name="Sci. Signal.">
        <title>Quantitative phosphoproteomic analysis of T cell receptor signaling reveals system-wide modulation of protein-protein interactions.</title>
        <authorList>
            <person name="Mayya V."/>
            <person name="Lundgren D.H."/>
            <person name="Hwang S.-I."/>
            <person name="Rezaul K."/>
            <person name="Wu L."/>
            <person name="Eng J.K."/>
            <person name="Rodionov V."/>
            <person name="Han D.K."/>
        </authorList>
    </citation>
    <scope>PHOSPHORYLATION [LARGE SCALE ANALYSIS] AT SER-1076</scope>
    <scope>IDENTIFICATION BY MASS SPECTROMETRY [LARGE SCALE ANALYSIS]</scope>
    <source>
        <tissue>Leukemic T-cell</tissue>
    </source>
</reference>
<reference key="13">
    <citation type="journal article" date="2009" name="Science">
        <title>Lysine acetylation targets protein complexes and co-regulates major cellular functions.</title>
        <authorList>
            <person name="Choudhary C."/>
            <person name="Kumar C."/>
            <person name="Gnad F."/>
            <person name="Nielsen M.L."/>
            <person name="Rehman M."/>
            <person name="Walther T.C."/>
            <person name="Olsen J.V."/>
            <person name="Mann M."/>
        </authorList>
    </citation>
    <scope>IDENTIFICATION BY MASS SPECTROMETRY [LARGE SCALE ANALYSIS]</scope>
</reference>
<reference key="14">
    <citation type="journal article" date="2010" name="Sci. Signal.">
        <title>Quantitative phosphoproteomics reveals widespread full phosphorylation site occupancy during mitosis.</title>
        <authorList>
            <person name="Olsen J.V."/>
            <person name="Vermeulen M."/>
            <person name="Santamaria A."/>
            <person name="Kumar C."/>
            <person name="Miller M.L."/>
            <person name="Jensen L.J."/>
            <person name="Gnad F."/>
            <person name="Cox J."/>
            <person name="Jensen T.S."/>
            <person name="Nigg E.A."/>
            <person name="Brunak S."/>
            <person name="Mann M."/>
        </authorList>
    </citation>
    <scope>PHOSPHORYLATION [LARGE SCALE ANALYSIS] AT SER-460; SER-462 AND SER-1076</scope>
    <scope>IDENTIFICATION BY MASS SPECTROMETRY [LARGE SCALE ANALYSIS]</scope>
    <source>
        <tissue>Cervix carcinoma</tissue>
    </source>
</reference>
<reference key="15">
    <citation type="journal article" date="2011" name="Sci. Signal.">
        <title>System-wide temporal characterization of the proteome and phosphoproteome of human embryonic stem cell differentiation.</title>
        <authorList>
            <person name="Rigbolt K.T."/>
            <person name="Prokhorova T.A."/>
            <person name="Akimov V."/>
            <person name="Henningsen J."/>
            <person name="Johansen P.T."/>
            <person name="Kratchmarova I."/>
            <person name="Kassem M."/>
            <person name="Mann M."/>
            <person name="Olsen J.V."/>
            <person name="Blagoev B."/>
        </authorList>
    </citation>
    <scope>PHOSPHORYLATION [LARGE SCALE ANALYSIS] AT SER-460; SER-462; SER-860 AND SER-1076</scope>
    <scope>IDENTIFICATION BY MASS SPECTROMETRY [LARGE SCALE ANALYSIS]</scope>
</reference>
<reference key="16">
    <citation type="journal article" date="2013" name="Genes Dev.">
        <title>Exchange of associated factors directs a switch in HBO1 acetyltransferase histone tail specificity.</title>
        <authorList>
            <person name="Lalonde M.E."/>
            <person name="Avvakumov N."/>
            <person name="Glass K.C."/>
            <person name="Joncas F.H."/>
            <person name="Saksouk N."/>
            <person name="Holliday M."/>
            <person name="Paquet E."/>
            <person name="Yan K."/>
            <person name="Tong Q."/>
            <person name="Klein B.J."/>
            <person name="Tan S."/>
            <person name="Yang X.J."/>
            <person name="Kutateladze T.G."/>
            <person name="Cote J."/>
        </authorList>
    </citation>
    <scope>FUNCTION</scope>
    <scope>IDENTIFICATION IN THE HBO1 COMPLEX</scope>
    <scope>SUBCELLULAR LOCATION</scope>
</reference>
<reference key="17">
    <citation type="journal article" date="2013" name="J. Proteome Res.">
        <title>Toward a comprehensive characterization of a human cancer cell phosphoproteome.</title>
        <authorList>
            <person name="Zhou H."/>
            <person name="Di Palma S."/>
            <person name="Preisinger C."/>
            <person name="Peng M."/>
            <person name="Polat A.N."/>
            <person name="Heck A.J."/>
            <person name="Mohammed S."/>
        </authorList>
    </citation>
    <scope>PHOSPHORYLATION [LARGE SCALE ANALYSIS] AT SER-460 AND SER-462</scope>
    <scope>IDENTIFICATION BY MASS SPECTROMETRY [LARGE SCALE ANALYSIS]</scope>
    <source>
        <tissue>Erythroleukemia</tissue>
    </source>
</reference>
<reference key="18">
    <citation type="journal article" date="2014" name="J. Proteomics">
        <title>An enzyme assisted RP-RPLC approach for in-depth analysis of human liver phosphoproteome.</title>
        <authorList>
            <person name="Bian Y."/>
            <person name="Song C."/>
            <person name="Cheng K."/>
            <person name="Dong M."/>
            <person name="Wang F."/>
            <person name="Huang J."/>
            <person name="Sun D."/>
            <person name="Wang L."/>
            <person name="Ye M."/>
            <person name="Zou H."/>
        </authorList>
    </citation>
    <scope>PHOSPHORYLATION [LARGE SCALE ANALYSIS] AT SER-238</scope>
    <scope>IDENTIFICATION BY MASS SPECTROMETRY [LARGE SCALE ANALYSIS]</scope>
    <source>
        <tissue>Liver</tissue>
    </source>
</reference>
<reference key="19">
    <citation type="journal article" date="2015" name="Genes Dev.">
        <title>Screen identifies bromodomain protein ZMYND8 in chromatin recognition of transcription-associated DNA damage that promotes homologous recombination.</title>
        <authorList>
            <person name="Gong F."/>
            <person name="Chiu L.Y."/>
            <person name="Cox B."/>
            <person name="Aymard F."/>
            <person name="Clouaire T."/>
            <person name="Leung J.W."/>
            <person name="Cammarata M."/>
            <person name="Perez M."/>
            <person name="Agarwal P."/>
            <person name="Brodbelt J.S."/>
            <person name="Legube G."/>
            <person name="Miller K.M."/>
        </authorList>
    </citation>
    <scope>SUBCELLULAR LOCATION</scope>
</reference>
<reference key="20">
    <citation type="submission" date="2006-06" db="PDB data bank">
        <title>Solution structure of the bromodomain of peregrin.</title>
        <authorList>
            <consortium name="RIKEN structural genomics initiative (RSGI)"/>
        </authorList>
    </citation>
    <scope>STRUCTURE BY NMR OF 633-740</scope>
</reference>
<reference key="21">
    <citation type="journal article" date="2010" name="Nat. Struct. Mol. Biol.">
        <title>Molecular basis of histone H3K36me3 recognition by the PWWP domain of Brpf1.</title>
        <authorList>
            <person name="Vezzoli A."/>
            <person name="Bonadies N."/>
            <person name="Allen M.D."/>
            <person name="Freund S.M."/>
            <person name="Santiveri C.M."/>
            <person name="Kvinlaug B.T."/>
            <person name="Huntly B.J."/>
            <person name="Gottgens B."/>
            <person name="Bycroft M."/>
        </authorList>
    </citation>
    <scope>X-RAY CRYSTALLOGRAPHY (1.5 ANGSTROMS) OF 1076-1205 IN COMPLEX WITH HISTONE H3 PEPTIDE</scope>
    <scope>INTERACTION WITH HISTONE H3</scope>
</reference>
<reference key="22">
    <citation type="journal article" date="2011" name="PLoS ONE">
        <title>Structural and histone binding ability characterizations of human PWWP domains.</title>
        <authorList>
            <person name="Wu H."/>
            <person name="Zeng H."/>
            <person name="Lam R."/>
            <person name="Tempel W."/>
            <person name="Amaya M.F."/>
            <person name="Xu C."/>
            <person name="Dombrovski L."/>
            <person name="Qiu W."/>
            <person name="Wang Y."/>
            <person name="Min J."/>
        </authorList>
    </citation>
    <scope>X-RAY CRYSTALLOGRAPHY (1.3 ANGSTROMS) OF 1079-1207 IN COMPLEX WITH TRIMETHYLATED HISTONE H3 PEPTIDE</scope>
    <scope>INTERACTION WITH HISTONE H3</scope>
</reference>
<reference key="23">
    <citation type="journal article" date="2017" name="Am. J. Hum. Genet.">
        <title>Mutations in the chromatin regulator gene BRPF1 cause syndromic intellectual disability and deficient histone acetylation.</title>
        <authorList>
            <consortium name="DDD Study"/>
            <consortium name="CAUSES Study"/>
            <person name="Yan K."/>
            <person name="Rousseau J."/>
            <person name="Littlejohn R.O."/>
            <person name="Kiss C."/>
            <person name="Lehman A."/>
            <person name="Rosenfeld J.A."/>
            <person name="Stumpel C.T."/>
            <person name="Stegmann A.P."/>
            <person name="Robak L."/>
            <person name="Scaglia F."/>
            <person name="Nguyen T.T."/>
            <person name="Fu H."/>
            <person name="Ajeawung N.F."/>
            <person name="Camurri M.V."/>
            <person name="Li L."/>
            <person name="Gardham A."/>
            <person name="Panis B."/>
            <person name="Almannai M."/>
            <person name="Sacoto M.J."/>
            <person name="Baskin B."/>
            <person name="Ruivenkamp C."/>
            <person name="Xia F."/>
            <person name="Bi W."/>
            <person name="Cho M.T."/>
            <person name="Potjer T.P."/>
            <person name="Santen G.W."/>
            <person name="Parker M.J."/>
            <person name="Canham N."/>
            <person name="McKinnon M."/>
            <person name="Potocki L."/>
            <person name="MacKenzie J.J."/>
            <person name="Roeder E.R."/>
            <person name="Campeau P.M."/>
            <person name="Yang X.J."/>
        </authorList>
    </citation>
    <scope>INVOLVEMENT IN IDDDFP</scope>
    <scope>VARIANTS IDDDFP SER-370; 455-ARG--ASP-1214 DEL; 833-GLY--ASP-1214 DEL AND 1100-PRO--ASP-1214 DEL</scope>
    <scope>CHARACTERIZATION OF VARIANTS IDDDFP SER-370; 455-ARG--ASP-1214 DEL; 833-GLY--ASP-1214 DEL AND 1100-PRO--ASP-1214 DEL</scope>
    <scope>FUNCTION</scope>
    <scope>SUBUNIT</scope>
    <scope>INTERACTION WITH KAT7</scope>
    <scope>SUBCELLULAR LOCATION</scope>
</reference>
<reference key="24">
    <citation type="journal article" date="2017" name="Am. J. Hum. Genet.">
        <title>Mutations in histone acetylase modifier BRPF1 cause an autosomal-dominant form of intellectual disability with associated ptosis.</title>
        <authorList>
            <person name="Mattioli F."/>
            <person name="Schaefer E."/>
            <person name="Magee A."/>
            <person name="Mark P."/>
            <person name="Mancini G.M."/>
            <person name="Dieterich K."/>
            <person name="Von Allmen G."/>
            <person name="Alders M."/>
            <person name="Coutton C."/>
            <person name="van Slegtenhorst M."/>
            <person name="Vieville G."/>
            <person name="Engelen M."/>
            <person name="Cobben J.M."/>
            <person name="Juusola J."/>
            <person name="Pujol A."/>
            <person name="Mandel J.L."/>
            <person name="Piton A."/>
        </authorList>
    </citation>
    <scope>INVOLVEMENT IN IDDDFP</scope>
    <scope>VARIANTS IDDDFP 35-TYR--ASP-1214 DEL; ARG-389 AND 988-LEU--ASP-1214 DEL</scope>
</reference>
<keyword id="KW-0002">3D-structure</keyword>
<keyword id="KW-0007">Acetylation</keyword>
<keyword id="KW-0010">Activator</keyword>
<keyword id="KW-0025">Alternative splicing</keyword>
<keyword id="KW-0103">Bromodomain</keyword>
<keyword id="KW-0156">Chromatin regulator</keyword>
<keyword id="KW-0158">Chromosome</keyword>
<keyword id="KW-0963">Cytoplasm</keyword>
<keyword id="KW-0225">Disease variant</keyword>
<keyword id="KW-0238">DNA-binding</keyword>
<keyword id="KW-0991">Intellectual disability</keyword>
<keyword id="KW-0479">Metal-binding</keyword>
<keyword id="KW-0539">Nucleus</keyword>
<keyword id="KW-0597">Phosphoprotein</keyword>
<keyword id="KW-1267">Proteomics identification</keyword>
<keyword id="KW-1185">Reference proteome</keyword>
<keyword id="KW-0677">Repeat</keyword>
<keyword id="KW-0804">Transcription</keyword>
<keyword id="KW-0805">Transcription regulation</keyword>
<keyword id="KW-0862">Zinc</keyword>
<keyword id="KW-0863">Zinc-finger</keyword>
<gene>
    <name evidence="22" type="primary">BRPF1</name>
    <name evidence="20" type="synonym">BR140</name>
</gene>
<evidence type="ECO:0000250" key="1">
    <source>
        <dbReference type="UniProtKB" id="B2RRD7"/>
    </source>
</evidence>
<evidence type="ECO:0000255" key="2">
    <source>
        <dbReference type="PROSITE-ProRule" id="PRU00035"/>
    </source>
</evidence>
<evidence type="ECO:0000255" key="3">
    <source>
        <dbReference type="PROSITE-ProRule" id="PRU00042"/>
    </source>
</evidence>
<evidence type="ECO:0000255" key="4">
    <source>
        <dbReference type="PROSITE-ProRule" id="PRU00146"/>
    </source>
</evidence>
<evidence type="ECO:0000255" key="5">
    <source>
        <dbReference type="PROSITE-ProRule" id="PRU00162"/>
    </source>
</evidence>
<evidence type="ECO:0000255" key="6">
    <source>
        <dbReference type="PROSITE-ProRule" id="PRU01146"/>
    </source>
</evidence>
<evidence type="ECO:0000256" key="7">
    <source>
        <dbReference type="SAM" id="MobiDB-lite"/>
    </source>
</evidence>
<evidence type="ECO:0000269" key="8">
    <source>
    </source>
</evidence>
<evidence type="ECO:0000269" key="9">
    <source>
    </source>
</evidence>
<evidence type="ECO:0000269" key="10">
    <source>
    </source>
</evidence>
<evidence type="ECO:0000269" key="11">
    <source>
    </source>
</evidence>
<evidence type="ECO:0000269" key="12">
    <source>
    </source>
</evidence>
<evidence type="ECO:0000269" key="13">
    <source>
    </source>
</evidence>
<evidence type="ECO:0000269" key="14">
    <source>
    </source>
</evidence>
<evidence type="ECO:0000269" key="15">
    <source>
    </source>
</evidence>
<evidence type="ECO:0000269" key="16">
    <source>
    </source>
</evidence>
<evidence type="ECO:0000303" key="17">
    <source>
    </source>
</evidence>
<evidence type="ECO:0000303" key="18">
    <source>
    </source>
</evidence>
<evidence type="ECO:0000303" key="19">
    <source>
    </source>
</evidence>
<evidence type="ECO:0000303" key="20">
    <source>
    </source>
</evidence>
<evidence type="ECO:0000305" key="21"/>
<evidence type="ECO:0000312" key="22">
    <source>
        <dbReference type="HGNC" id="HGNC:14255"/>
    </source>
</evidence>
<evidence type="ECO:0007744" key="23">
    <source>
    </source>
</evidence>
<evidence type="ECO:0007744" key="24">
    <source>
    </source>
</evidence>
<evidence type="ECO:0007744" key="25">
    <source>
    </source>
</evidence>
<evidence type="ECO:0007744" key="26">
    <source>
    </source>
</evidence>
<evidence type="ECO:0007744" key="27">
    <source>
    </source>
</evidence>
<evidence type="ECO:0007744" key="28">
    <source>
    </source>
</evidence>
<evidence type="ECO:0007744" key="29">
    <source>
    </source>
</evidence>
<evidence type="ECO:0007829" key="30">
    <source>
        <dbReference type="PDB" id="3L42"/>
    </source>
</evidence>
<evidence type="ECO:0007829" key="31">
    <source>
        <dbReference type="PDB" id="3MO8"/>
    </source>
</evidence>
<evidence type="ECO:0007829" key="32">
    <source>
        <dbReference type="PDB" id="5ERC"/>
    </source>
</evidence>
<evidence type="ECO:0007829" key="33">
    <source>
        <dbReference type="PDB" id="5FFV"/>
    </source>
</evidence>
<evidence type="ECO:0007829" key="34">
    <source>
        <dbReference type="PDB" id="5FFW"/>
    </source>
</evidence>
<evidence type="ECO:0007829" key="35">
    <source>
        <dbReference type="PDB" id="5G4S"/>
    </source>
</evidence>
<evidence type="ECO:0007829" key="36">
    <source>
        <dbReference type="PDB" id="5MWZ"/>
    </source>
</evidence>
<evidence type="ECO:0007829" key="37">
    <source>
        <dbReference type="PDB" id="6U04"/>
    </source>
</evidence>
<dbReference type="EMBL" id="M91585">
    <property type="protein sequence ID" value="AAB02119.1"/>
    <property type="molecule type" value="mRNA"/>
</dbReference>
<dbReference type="EMBL" id="AF176815">
    <property type="protein sequence ID" value="AAF19605.1"/>
    <property type="molecule type" value="Genomic_DNA"/>
</dbReference>
<dbReference type="EMBL" id="AK293865">
    <property type="protein sequence ID" value="BAG57257.1"/>
    <property type="molecule type" value="mRNA"/>
</dbReference>
<dbReference type="EMBL" id="AL713696">
    <property type="protein sequence ID" value="CAD28495.1"/>
    <property type="molecule type" value="mRNA"/>
</dbReference>
<dbReference type="EMBL" id="AC022382">
    <property type="status" value="NOT_ANNOTATED_CDS"/>
    <property type="molecule type" value="Genomic_DNA"/>
</dbReference>
<dbReference type="EMBL" id="CH471055">
    <property type="protein sequence ID" value="EAW63976.1"/>
    <property type="molecule type" value="Genomic_DNA"/>
</dbReference>
<dbReference type="EMBL" id="BC053851">
    <property type="protein sequence ID" value="AAH53851.1"/>
    <property type="molecule type" value="mRNA"/>
</dbReference>
<dbReference type="CCDS" id="CCDS2575.1">
    <molecule id="P55201-1"/>
</dbReference>
<dbReference type="CCDS" id="CCDS33692.1">
    <molecule id="P55201-2"/>
</dbReference>
<dbReference type="CCDS" id="CCDS82729.1">
    <molecule id="P55201-4"/>
</dbReference>
<dbReference type="CCDS" id="CCDS82730.1">
    <molecule id="P55201-3"/>
</dbReference>
<dbReference type="PIR" id="JC2069">
    <property type="entry name" value="JC2069"/>
</dbReference>
<dbReference type="RefSeq" id="NP_001003694.1">
    <molecule id="P55201-2"/>
    <property type="nucleotide sequence ID" value="NM_001003694.2"/>
</dbReference>
<dbReference type="RefSeq" id="NP_001305978.1">
    <molecule id="P55201-4"/>
    <property type="nucleotide sequence ID" value="NM_001319049.2"/>
</dbReference>
<dbReference type="RefSeq" id="NP_001305979.1">
    <molecule id="P55201-3"/>
    <property type="nucleotide sequence ID" value="NM_001319050.2"/>
</dbReference>
<dbReference type="RefSeq" id="NP_004625.2">
    <molecule id="P55201-1"/>
    <property type="nucleotide sequence ID" value="NM_004634.3"/>
</dbReference>
<dbReference type="RefSeq" id="XP_047304832.1">
    <molecule id="P55201-2"/>
    <property type="nucleotide sequence ID" value="XM_047448876.1"/>
</dbReference>
<dbReference type="RefSeq" id="XP_047304833.1">
    <molecule id="P55201-3"/>
    <property type="nucleotide sequence ID" value="XM_047448877.1"/>
</dbReference>
<dbReference type="RefSeq" id="XP_054203765.1">
    <molecule id="P55201-2"/>
    <property type="nucleotide sequence ID" value="XM_054347790.1"/>
</dbReference>
<dbReference type="RefSeq" id="XP_054203766.1">
    <molecule id="P55201-3"/>
    <property type="nucleotide sequence ID" value="XM_054347791.1"/>
</dbReference>
<dbReference type="PDB" id="2D9E">
    <property type="method" value="NMR"/>
    <property type="chains" value="A=633-740"/>
</dbReference>
<dbReference type="PDB" id="2RS9">
    <property type="method" value="NMR"/>
    <property type="chains" value="B=633-740"/>
</dbReference>
<dbReference type="PDB" id="2X35">
    <property type="method" value="X-ray"/>
    <property type="resolution" value="2.00 A"/>
    <property type="chains" value="A=1076-1205"/>
</dbReference>
<dbReference type="PDB" id="2X4W">
    <property type="method" value="X-ray"/>
    <property type="resolution" value="1.50 A"/>
    <property type="chains" value="A=1076-1205"/>
</dbReference>
<dbReference type="PDB" id="2X4X">
    <property type="method" value="X-ray"/>
    <property type="resolution" value="1.85 A"/>
    <property type="chains" value="A/C/E/G=1076-1205"/>
</dbReference>
<dbReference type="PDB" id="2X4Y">
    <property type="method" value="X-ray"/>
    <property type="resolution" value="1.70 A"/>
    <property type="chains" value="A/C/E/G/I/K/M/O=1076-1205"/>
</dbReference>
<dbReference type="PDB" id="3L42">
    <property type="method" value="X-ray"/>
    <property type="resolution" value="1.30 A"/>
    <property type="chains" value="A=1079-1207"/>
</dbReference>
<dbReference type="PDB" id="3MO8">
    <property type="method" value="X-ray"/>
    <property type="resolution" value="1.69 A"/>
    <property type="chains" value="A=1079-1207"/>
</dbReference>
<dbReference type="PDB" id="4LC2">
    <property type="method" value="X-ray"/>
    <property type="resolution" value="1.65 A"/>
    <property type="chains" value="A=626-740"/>
</dbReference>
<dbReference type="PDB" id="4QYD">
    <property type="method" value="X-ray"/>
    <property type="resolution" value="1.94 A"/>
    <property type="chains" value="A=629-742"/>
</dbReference>
<dbReference type="PDB" id="4QYL">
    <property type="method" value="X-ray"/>
    <property type="resolution" value="1.80 A"/>
    <property type="chains" value="A/B/C/D=629-742"/>
</dbReference>
<dbReference type="PDB" id="4UYE">
    <property type="method" value="X-ray"/>
    <property type="resolution" value="1.65 A"/>
    <property type="chains" value="A/B=622-738"/>
</dbReference>
<dbReference type="PDB" id="5C6S">
    <property type="method" value="X-ray"/>
    <property type="resolution" value="1.30 A"/>
    <property type="chains" value="A=1079-1207"/>
</dbReference>
<dbReference type="PDB" id="5C7N">
    <property type="method" value="X-ray"/>
    <property type="resolution" value="1.75 A"/>
    <property type="chains" value="A=626-740"/>
</dbReference>
<dbReference type="PDB" id="5C85">
    <property type="method" value="X-ray"/>
    <property type="resolution" value="1.70 A"/>
    <property type="chains" value="A=626-740"/>
</dbReference>
<dbReference type="PDB" id="5C87">
    <property type="method" value="X-ray"/>
    <property type="resolution" value="1.55 A"/>
    <property type="chains" value="A=626-740"/>
</dbReference>
<dbReference type="PDB" id="5C89">
    <property type="method" value="X-ray"/>
    <property type="resolution" value="1.65 A"/>
    <property type="chains" value="A=627-740"/>
</dbReference>
<dbReference type="PDB" id="5D7X">
    <property type="method" value="X-ray"/>
    <property type="resolution" value="1.35 A"/>
    <property type="chains" value="A=626-740"/>
</dbReference>
<dbReference type="PDB" id="5DY7">
    <property type="method" value="X-ray"/>
    <property type="resolution" value="1.69 A"/>
    <property type="chains" value="A=626-740"/>
</dbReference>
<dbReference type="PDB" id="5DYA">
    <property type="method" value="X-ray"/>
    <property type="resolution" value="1.65 A"/>
    <property type="chains" value="A=626-740"/>
</dbReference>
<dbReference type="PDB" id="5DYC">
    <property type="method" value="X-ray"/>
    <property type="resolution" value="1.65 A"/>
    <property type="chains" value="A=626-740"/>
</dbReference>
<dbReference type="PDB" id="5E3D">
    <property type="method" value="X-ray"/>
    <property type="resolution" value="1.71 A"/>
    <property type="chains" value="A=626-740"/>
</dbReference>
<dbReference type="PDB" id="5E3G">
    <property type="method" value="X-ray"/>
    <property type="resolution" value="1.65 A"/>
    <property type="chains" value="A=626-740"/>
</dbReference>
<dbReference type="PDB" id="5EM3">
    <property type="method" value="X-ray"/>
    <property type="resolution" value="1.40 A"/>
    <property type="chains" value="A=626-740"/>
</dbReference>
<dbReference type="PDB" id="5EPR">
    <property type="method" value="X-ray"/>
    <property type="resolution" value="1.65 A"/>
    <property type="chains" value="A=626-740"/>
</dbReference>
<dbReference type="PDB" id="5EPS">
    <property type="method" value="X-ray"/>
    <property type="resolution" value="1.47 A"/>
    <property type="chains" value="A=627-740"/>
</dbReference>
<dbReference type="PDB" id="5EQ1">
    <property type="method" value="X-ray"/>
    <property type="resolution" value="1.55 A"/>
    <property type="chains" value="A=626-740"/>
</dbReference>
<dbReference type="PDB" id="5ERC">
    <property type="method" value="X-ray"/>
    <property type="resolution" value="2.05 A"/>
    <property type="chains" value="A=274-450"/>
</dbReference>
<dbReference type="PDB" id="5ETB">
    <property type="method" value="X-ray"/>
    <property type="resolution" value="1.33 A"/>
    <property type="chains" value="A=626-740"/>
</dbReference>
<dbReference type="PDB" id="5ETD">
    <property type="method" value="X-ray"/>
    <property type="resolution" value="1.40 A"/>
    <property type="chains" value="A=626-740"/>
</dbReference>
<dbReference type="PDB" id="5EV9">
    <property type="method" value="X-ray"/>
    <property type="resolution" value="1.45 A"/>
    <property type="chains" value="A=626-740"/>
</dbReference>
<dbReference type="PDB" id="5EVA">
    <property type="method" value="X-ray"/>
    <property type="resolution" value="1.45 A"/>
    <property type="chains" value="A=626-740"/>
</dbReference>
<dbReference type="PDB" id="5EWC">
    <property type="method" value="X-ray"/>
    <property type="resolution" value="1.75 A"/>
    <property type="chains" value="A=626-740"/>
</dbReference>
<dbReference type="PDB" id="5EWD">
    <property type="method" value="X-ray"/>
    <property type="resolution" value="1.58 A"/>
    <property type="chains" value="A=626-740"/>
</dbReference>
<dbReference type="PDB" id="5EWH">
    <property type="method" value="X-ray"/>
    <property type="resolution" value="1.63 A"/>
    <property type="chains" value="A=626-740"/>
</dbReference>
<dbReference type="PDB" id="5EWV">
    <property type="method" value="X-ray"/>
    <property type="resolution" value="1.67 A"/>
    <property type="chains" value="A=626-740"/>
</dbReference>
<dbReference type="PDB" id="5EWW">
    <property type="method" value="X-ray"/>
    <property type="resolution" value="1.73 A"/>
    <property type="chains" value="A=626-740"/>
</dbReference>
<dbReference type="PDB" id="5FFV">
    <property type="method" value="X-ray"/>
    <property type="resolution" value="1.30 A"/>
    <property type="chains" value="A/B=626-740"/>
</dbReference>
<dbReference type="PDB" id="5FFW">
    <property type="method" value="X-ray"/>
    <property type="resolution" value="1.50 A"/>
    <property type="chains" value="A/B=626-740"/>
</dbReference>
<dbReference type="PDB" id="5FFY">
    <property type="method" value="X-ray"/>
    <property type="resolution" value="1.55 A"/>
    <property type="chains" value="A=626-740"/>
</dbReference>
<dbReference type="PDB" id="5FG4">
    <property type="method" value="X-ray"/>
    <property type="resolution" value="1.65 A"/>
    <property type="chains" value="A=626-740"/>
</dbReference>
<dbReference type="PDB" id="5FG5">
    <property type="method" value="X-ray"/>
    <property type="resolution" value="1.50 A"/>
    <property type="chains" value="A/B=626-740"/>
</dbReference>
<dbReference type="PDB" id="5G4R">
    <property type="method" value="X-ray"/>
    <property type="resolution" value="1.96 A"/>
    <property type="chains" value="A/B/C/D=622-738"/>
</dbReference>
<dbReference type="PDB" id="5G4S">
    <property type="method" value="X-ray"/>
    <property type="resolution" value="1.60 A"/>
    <property type="chains" value="A=624-738"/>
</dbReference>
<dbReference type="PDB" id="5MWG">
    <property type="method" value="X-ray"/>
    <property type="resolution" value="1.50 A"/>
    <property type="chains" value="A/B=626-740"/>
</dbReference>
<dbReference type="PDB" id="5MWH">
    <property type="method" value="X-ray"/>
    <property type="resolution" value="1.65 A"/>
    <property type="chains" value="A/B=626-740"/>
</dbReference>
<dbReference type="PDB" id="5MWZ">
    <property type="method" value="X-ray"/>
    <property type="resolution" value="1.25 A"/>
    <property type="chains" value="A=626-740"/>
</dbReference>
<dbReference type="PDB" id="5MYG">
    <property type="method" value="X-ray"/>
    <property type="resolution" value="2.30 A"/>
    <property type="chains" value="A/B/C/D=626-740"/>
</dbReference>
<dbReference type="PDB" id="5O4S">
    <property type="method" value="X-ray"/>
    <property type="resolution" value="1.75 A"/>
    <property type="chains" value="A/B=626-740"/>
</dbReference>
<dbReference type="PDB" id="5O4T">
    <property type="method" value="X-ray"/>
    <property type="resolution" value="1.50 A"/>
    <property type="chains" value="A=626-740"/>
</dbReference>
<dbReference type="PDB" id="5O55">
    <property type="method" value="X-ray"/>
    <property type="resolution" value="1.45 A"/>
    <property type="chains" value="A=626-740"/>
</dbReference>
<dbReference type="PDB" id="5O5A">
    <property type="method" value="X-ray"/>
    <property type="resolution" value="1.60 A"/>
    <property type="chains" value="A=626-740"/>
</dbReference>
<dbReference type="PDB" id="5O5F">
    <property type="method" value="X-ray"/>
    <property type="resolution" value="1.30 A"/>
    <property type="chains" value="A=626-740"/>
</dbReference>
<dbReference type="PDB" id="5O5H">
    <property type="method" value="X-ray"/>
    <property type="resolution" value="1.85 A"/>
    <property type="chains" value="A=626-740"/>
</dbReference>
<dbReference type="PDB" id="5OV8">
    <property type="method" value="X-ray"/>
    <property type="resolution" value="1.80 A"/>
    <property type="chains" value="A/B=626-740"/>
</dbReference>
<dbReference type="PDB" id="5OWA">
    <property type="method" value="X-ray"/>
    <property type="resolution" value="1.95 A"/>
    <property type="chains" value="A/B/C/D=626-740"/>
</dbReference>
<dbReference type="PDB" id="5OWB">
    <property type="method" value="X-ray"/>
    <property type="resolution" value="1.65 A"/>
    <property type="chains" value="A=626-740"/>
</dbReference>
<dbReference type="PDB" id="5OWE">
    <property type="method" value="X-ray"/>
    <property type="resolution" value="1.70 A"/>
    <property type="chains" value="A=626-740"/>
</dbReference>
<dbReference type="PDB" id="5T4U">
    <property type="method" value="X-ray"/>
    <property type="resolution" value="1.50 A"/>
    <property type="chains" value="A=627-740"/>
</dbReference>
<dbReference type="PDB" id="5T4V">
    <property type="method" value="X-ray"/>
    <property type="resolution" value="1.65 A"/>
    <property type="chains" value="A=627-740"/>
</dbReference>
<dbReference type="PDB" id="6EKQ">
    <property type="method" value="X-ray"/>
    <property type="resolution" value="1.65 A"/>
    <property type="chains" value="A/B=626-740"/>
</dbReference>
<dbReference type="PDB" id="6U04">
    <property type="method" value="X-ray"/>
    <property type="resolution" value="2.20 A"/>
    <property type="chains" value="A=271-454"/>
</dbReference>
<dbReference type="PDB" id="7C4I">
    <property type="method" value="X-ray"/>
    <property type="resolution" value="1.37 A"/>
    <property type="chains" value="A=625-740"/>
</dbReference>
<dbReference type="PDB" id="8QAZ">
    <property type="method" value="X-ray"/>
    <property type="resolution" value="1.40 A"/>
    <property type="chains" value="A=626-740"/>
</dbReference>
<dbReference type="PDB" id="8QB0">
    <property type="method" value="X-ray"/>
    <property type="resolution" value="1.45 A"/>
    <property type="chains" value="A=626-740"/>
</dbReference>
<dbReference type="PDB" id="8QB2">
    <property type="method" value="X-ray"/>
    <property type="resolution" value="1.42 A"/>
    <property type="chains" value="A=626-740"/>
</dbReference>
<dbReference type="PDBsum" id="2D9E"/>
<dbReference type="PDBsum" id="2RS9"/>
<dbReference type="PDBsum" id="2X35"/>
<dbReference type="PDBsum" id="2X4W"/>
<dbReference type="PDBsum" id="2X4X"/>
<dbReference type="PDBsum" id="2X4Y"/>
<dbReference type="PDBsum" id="3L42"/>
<dbReference type="PDBsum" id="3MO8"/>
<dbReference type="PDBsum" id="4LC2"/>
<dbReference type="PDBsum" id="4QYD"/>
<dbReference type="PDBsum" id="4QYL"/>
<dbReference type="PDBsum" id="4UYE"/>
<dbReference type="PDBsum" id="5C6S"/>
<dbReference type="PDBsum" id="5C7N"/>
<dbReference type="PDBsum" id="5C85"/>
<dbReference type="PDBsum" id="5C87"/>
<dbReference type="PDBsum" id="5C89"/>
<dbReference type="PDBsum" id="5D7X"/>
<dbReference type="PDBsum" id="5DY7"/>
<dbReference type="PDBsum" id="5DYA"/>
<dbReference type="PDBsum" id="5DYC"/>
<dbReference type="PDBsum" id="5E3D"/>
<dbReference type="PDBsum" id="5E3G"/>
<dbReference type="PDBsum" id="5EM3"/>
<dbReference type="PDBsum" id="5EPR"/>
<dbReference type="PDBsum" id="5EPS"/>
<dbReference type="PDBsum" id="5EQ1"/>
<dbReference type="PDBsum" id="5ERC"/>
<dbReference type="PDBsum" id="5ETB"/>
<dbReference type="PDBsum" id="5ETD"/>
<dbReference type="PDBsum" id="5EV9"/>
<dbReference type="PDBsum" id="5EVA"/>
<dbReference type="PDBsum" id="5EWC"/>
<dbReference type="PDBsum" id="5EWD"/>
<dbReference type="PDBsum" id="5EWH"/>
<dbReference type="PDBsum" id="5EWV"/>
<dbReference type="PDBsum" id="5EWW"/>
<dbReference type="PDBsum" id="5FFV"/>
<dbReference type="PDBsum" id="5FFW"/>
<dbReference type="PDBsum" id="5FFY"/>
<dbReference type="PDBsum" id="5FG4"/>
<dbReference type="PDBsum" id="5FG5"/>
<dbReference type="PDBsum" id="5G4R"/>
<dbReference type="PDBsum" id="5G4S"/>
<dbReference type="PDBsum" id="5MWG"/>
<dbReference type="PDBsum" id="5MWH"/>
<dbReference type="PDBsum" id="5MWZ"/>
<dbReference type="PDBsum" id="5MYG"/>
<dbReference type="PDBsum" id="5O4S"/>
<dbReference type="PDBsum" id="5O4T"/>
<dbReference type="PDBsum" id="5O55"/>
<dbReference type="PDBsum" id="5O5A"/>
<dbReference type="PDBsum" id="5O5F"/>
<dbReference type="PDBsum" id="5O5H"/>
<dbReference type="PDBsum" id="5OV8"/>
<dbReference type="PDBsum" id="5OWA"/>
<dbReference type="PDBsum" id="5OWB"/>
<dbReference type="PDBsum" id="5OWE"/>
<dbReference type="PDBsum" id="5T4U"/>
<dbReference type="PDBsum" id="5T4V"/>
<dbReference type="PDBsum" id="6EKQ"/>
<dbReference type="PDBsum" id="6U04"/>
<dbReference type="PDBsum" id="7C4I"/>
<dbReference type="PDBsum" id="8QAZ"/>
<dbReference type="PDBsum" id="8QB0"/>
<dbReference type="PDBsum" id="8QB2"/>
<dbReference type="BMRB" id="P55201"/>
<dbReference type="SMR" id="P55201"/>
<dbReference type="BioGRID" id="113614">
    <property type="interactions" value="82"/>
</dbReference>
<dbReference type="ComplexPortal" id="CPX-727">
    <property type="entry name" value="MOZ1 histone acetyltransferase complex"/>
</dbReference>
<dbReference type="ComplexPortal" id="CPX-738">
    <property type="entry name" value="MORF1 histone acetyltransferase complex"/>
</dbReference>
<dbReference type="CORUM" id="P55201"/>
<dbReference type="DIP" id="DIP-59001N"/>
<dbReference type="FunCoup" id="P55201">
    <property type="interactions" value="3776"/>
</dbReference>
<dbReference type="IntAct" id="P55201">
    <property type="interactions" value="46"/>
</dbReference>
<dbReference type="MINT" id="P55201"/>
<dbReference type="STRING" id="9606.ENSP00000373340"/>
<dbReference type="BindingDB" id="P55201"/>
<dbReference type="ChEMBL" id="CHEMBL3132741"/>
<dbReference type="GuidetoPHARMACOLOGY" id="2730"/>
<dbReference type="GlyGen" id="P55201">
    <property type="glycosylation" value="2 sites, 1 N-linked glycan (1 site), 1 O-linked glycan (1 site)"/>
</dbReference>
<dbReference type="iPTMnet" id="P55201"/>
<dbReference type="PhosphoSitePlus" id="P55201"/>
<dbReference type="SwissPalm" id="P55201"/>
<dbReference type="BioMuta" id="BRPF1"/>
<dbReference type="DMDM" id="116241271"/>
<dbReference type="jPOST" id="P55201"/>
<dbReference type="MassIVE" id="P55201"/>
<dbReference type="PaxDb" id="9606-ENSP00000373340"/>
<dbReference type="PeptideAtlas" id="P55201"/>
<dbReference type="ProteomicsDB" id="56806">
    <molecule id="P55201-1"/>
</dbReference>
<dbReference type="ProteomicsDB" id="56807">
    <molecule id="P55201-2"/>
</dbReference>
<dbReference type="ProteomicsDB" id="56808">
    <molecule id="P55201-3"/>
</dbReference>
<dbReference type="ProteomicsDB" id="56809">
    <molecule id="P55201-4"/>
</dbReference>
<dbReference type="Pumba" id="P55201"/>
<dbReference type="TopDownProteomics" id="P55201-2">
    <molecule id="P55201-2"/>
</dbReference>
<dbReference type="Antibodypedia" id="933">
    <property type="antibodies" value="59 antibodies from 17 providers"/>
</dbReference>
<dbReference type="DNASU" id="7862"/>
<dbReference type="Ensembl" id="ENST00000383829.7">
    <molecule id="P55201-2"/>
    <property type="protein sequence ID" value="ENSP00000373340.2"/>
    <property type="gene ID" value="ENSG00000156983.17"/>
</dbReference>
<dbReference type="Ensembl" id="ENST00000433861.6">
    <molecule id="P55201-4"/>
    <property type="protein sequence ID" value="ENSP00000402485.2"/>
    <property type="gene ID" value="ENSG00000156983.17"/>
</dbReference>
<dbReference type="Ensembl" id="ENST00000683743.1">
    <molecule id="P55201-1"/>
    <property type="protein sequence ID" value="ENSP00000507469.1"/>
    <property type="gene ID" value="ENSG00000156983.17"/>
</dbReference>
<dbReference type="Ensembl" id="ENST00000684199.1">
    <molecule id="P55201-2"/>
    <property type="protein sequence ID" value="ENSP00000506921.1"/>
    <property type="gene ID" value="ENSG00000156983.17"/>
</dbReference>
<dbReference type="Ensembl" id="ENST00000684333.1">
    <molecule id="P55201-3"/>
    <property type="protein sequence ID" value="ENSP00000508256.1"/>
    <property type="gene ID" value="ENSG00000156983.17"/>
</dbReference>
<dbReference type="GeneID" id="7862"/>
<dbReference type="KEGG" id="hsa:7862"/>
<dbReference type="MANE-Select" id="ENST00000383829.7">
    <molecule id="P55201-2"/>
    <property type="protein sequence ID" value="ENSP00000373340.2"/>
    <property type="RefSeq nucleotide sequence ID" value="NM_001003694.2"/>
    <property type="RefSeq protein sequence ID" value="NP_001003694.1"/>
</dbReference>
<dbReference type="UCSC" id="uc003bsf.4">
    <molecule id="P55201-1"/>
    <property type="organism name" value="human"/>
</dbReference>
<dbReference type="AGR" id="HGNC:14255"/>
<dbReference type="CTD" id="7862"/>
<dbReference type="DisGeNET" id="7862"/>
<dbReference type="GeneCards" id="BRPF1"/>
<dbReference type="HGNC" id="HGNC:14255">
    <property type="gene designation" value="BRPF1"/>
</dbReference>
<dbReference type="HPA" id="ENSG00000156983">
    <property type="expression patterns" value="Low tissue specificity"/>
</dbReference>
<dbReference type="MalaCards" id="BRPF1"/>
<dbReference type="MIM" id="602410">
    <property type="type" value="gene"/>
</dbReference>
<dbReference type="MIM" id="617333">
    <property type="type" value="phenotype"/>
</dbReference>
<dbReference type="neXtProt" id="NX_P55201"/>
<dbReference type="OpenTargets" id="ENSG00000156983"/>
<dbReference type="PharmGKB" id="PA25424"/>
<dbReference type="VEuPathDB" id="HostDB:ENSG00000156983"/>
<dbReference type="eggNOG" id="KOG0955">
    <property type="taxonomic scope" value="Eukaryota"/>
</dbReference>
<dbReference type="GeneTree" id="ENSGT00940000157794"/>
<dbReference type="HOGENOM" id="CLU_003589_1_0_1"/>
<dbReference type="InParanoid" id="P55201"/>
<dbReference type="OMA" id="PDYMDIV"/>
<dbReference type="OrthoDB" id="20839at2759"/>
<dbReference type="PAN-GO" id="P55201">
    <property type="GO annotations" value="2 GO annotations based on evolutionary models"/>
</dbReference>
<dbReference type="PhylomeDB" id="P55201"/>
<dbReference type="TreeFam" id="TF316118"/>
<dbReference type="PathwayCommons" id="P55201"/>
<dbReference type="Reactome" id="R-HSA-3214847">
    <property type="pathway name" value="HATs acetylate histones"/>
</dbReference>
<dbReference type="Reactome" id="R-HSA-6804758">
    <property type="pathway name" value="Regulation of TP53 Activity through Acetylation"/>
</dbReference>
<dbReference type="SignaLink" id="P55201"/>
<dbReference type="BioGRID-ORCS" id="7862">
    <property type="hits" value="182 hits in 1184 CRISPR screens"/>
</dbReference>
<dbReference type="ChiTaRS" id="BRPF1">
    <property type="organism name" value="human"/>
</dbReference>
<dbReference type="EvolutionaryTrace" id="P55201"/>
<dbReference type="GenomeRNAi" id="7862"/>
<dbReference type="Pharos" id="P55201">
    <property type="development level" value="Tchem"/>
</dbReference>
<dbReference type="PRO" id="PR:P55201"/>
<dbReference type="Proteomes" id="UP000005640">
    <property type="component" value="Chromosome 3"/>
</dbReference>
<dbReference type="RNAct" id="P55201">
    <property type="molecule type" value="protein"/>
</dbReference>
<dbReference type="Bgee" id="ENSG00000156983">
    <property type="expression patterns" value="Expressed in oocyte and 176 other cell types or tissues"/>
</dbReference>
<dbReference type="ExpressionAtlas" id="P55201">
    <property type="expression patterns" value="baseline and differential"/>
</dbReference>
<dbReference type="GO" id="GO:0005737">
    <property type="term" value="C:cytoplasm"/>
    <property type="evidence" value="ECO:0000314"/>
    <property type="project" value="UniProtKB"/>
</dbReference>
<dbReference type="GO" id="GO:0005829">
    <property type="term" value="C:cytosol"/>
    <property type="evidence" value="ECO:0000314"/>
    <property type="project" value="HPA"/>
</dbReference>
<dbReference type="GO" id="GO:0000123">
    <property type="term" value="C:histone acetyltransferase complex"/>
    <property type="evidence" value="ECO:0000314"/>
    <property type="project" value="UniProtKB"/>
</dbReference>
<dbReference type="GO" id="GO:0070776">
    <property type="term" value="C:MOZ/MORF histone acetyltransferase complex"/>
    <property type="evidence" value="ECO:0000314"/>
    <property type="project" value="UniProtKB"/>
</dbReference>
<dbReference type="GO" id="GO:0005654">
    <property type="term" value="C:nucleoplasm"/>
    <property type="evidence" value="ECO:0000304"/>
    <property type="project" value="Reactome"/>
</dbReference>
<dbReference type="GO" id="GO:0005634">
    <property type="term" value="C:nucleus"/>
    <property type="evidence" value="ECO:0000314"/>
    <property type="project" value="UniProtKB"/>
</dbReference>
<dbReference type="GO" id="GO:0005886">
    <property type="term" value="C:plasma membrane"/>
    <property type="evidence" value="ECO:0000314"/>
    <property type="project" value="HPA"/>
</dbReference>
<dbReference type="GO" id="GO:0010698">
    <property type="term" value="F:acetyltransferase activator activity"/>
    <property type="evidence" value="ECO:0000314"/>
    <property type="project" value="UniProtKB"/>
</dbReference>
<dbReference type="GO" id="GO:0003677">
    <property type="term" value="F:DNA binding"/>
    <property type="evidence" value="ECO:0007669"/>
    <property type="project" value="UniProtKB-KW"/>
</dbReference>
<dbReference type="GO" id="GO:0008270">
    <property type="term" value="F:zinc ion binding"/>
    <property type="evidence" value="ECO:0007669"/>
    <property type="project" value="UniProtKB-KW"/>
</dbReference>
<dbReference type="GO" id="GO:0006338">
    <property type="term" value="P:chromatin remodeling"/>
    <property type="evidence" value="ECO:0000315"/>
    <property type="project" value="UniProtKB"/>
</dbReference>
<dbReference type="GO" id="GO:0045893">
    <property type="term" value="P:positive regulation of DNA-templated transcription"/>
    <property type="evidence" value="ECO:0000314"/>
    <property type="project" value="UniProtKB"/>
</dbReference>
<dbReference type="GO" id="GO:0050793">
    <property type="term" value="P:regulation of developmental process"/>
    <property type="evidence" value="ECO:0000303"/>
    <property type="project" value="ComplexPortal"/>
</dbReference>
<dbReference type="GO" id="GO:0006355">
    <property type="term" value="P:regulation of DNA-templated transcription"/>
    <property type="evidence" value="ECO:0000314"/>
    <property type="project" value="ComplexPortal"/>
</dbReference>
<dbReference type="GO" id="GO:1903706">
    <property type="term" value="P:regulation of hemopoiesis"/>
    <property type="evidence" value="ECO:0000303"/>
    <property type="project" value="ComplexPortal"/>
</dbReference>
<dbReference type="GO" id="GO:0006357">
    <property type="term" value="P:regulation of transcription by RNA polymerase II"/>
    <property type="evidence" value="ECO:0000318"/>
    <property type="project" value="GO_Central"/>
</dbReference>
<dbReference type="CDD" id="cd05512">
    <property type="entry name" value="Bromo_brd1_like"/>
    <property type="match status" value="1"/>
</dbReference>
<dbReference type="CDD" id="cd15701">
    <property type="entry name" value="ePHD_BRPF1"/>
    <property type="match status" value="1"/>
</dbReference>
<dbReference type="CDD" id="cd15676">
    <property type="entry name" value="PHD_BRPF1"/>
    <property type="match status" value="1"/>
</dbReference>
<dbReference type="CDD" id="cd20156">
    <property type="entry name" value="PWWP_BRPF1"/>
    <property type="match status" value="1"/>
</dbReference>
<dbReference type="FunFam" id="3.30.40.10:FF:000008">
    <property type="entry name" value="Bromodomain containing 1, isoform CRA_a"/>
    <property type="match status" value="1"/>
</dbReference>
<dbReference type="FunFam" id="2.30.30.140:FF:000008">
    <property type="entry name" value="Bromodomain containing 1, isoform CRA_b"/>
    <property type="match status" value="1"/>
</dbReference>
<dbReference type="FunFam" id="3.30.40.10:FF:000007">
    <property type="entry name" value="Bromodomain containing 1, isoform CRA_b"/>
    <property type="match status" value="1"/>
</dbReference>
<dbReference type="FunFam" id="1.20.920.10:FF:000007">
    <property type="entry name" value="Bromodomain-containing protein 1"/>
    <property type="match status" value="1"/>
</dbReference>
<dbReference type="Gene3D" id="2.30.30.140">
    <property type="match status" value="1"/>
</dbReference>
<dbReference type="Gene3D" id="1.20.920.10">
    <property type="entry name" value="Bromodomain-like"/>
    <property type="match status" value="1"/>
</dbReference>
<dbReference type="Gene3D" id="3.30.40.10">
    <property type="entry name" value="Zinc/RING finger domain, C3HC4 (zinc finger)"/>
    <property type="match status" value="2"/>
</dbReference>
<dbReference type="IDEAL" id="IID00374"/>
<dbReference type="InterPro" id="IPR001487">
    <property type="entry name" value="Bromodomain"/>
</dbReference>
<dbReference type="InterPro" id="IPR036427">
    <property type="entry name" value="Bromodomain-like_sf"/>
</dbReference>
<dbReference type="InterPro" id="IPR018359">
    <property type="entry name" value="Bromodomain_CS"/>
</dbReference>
<dbReference type="InterPro" id="IPR042008">
    <property type="entry name" value="BRPF1_PHD"/>
</dbReference>
<dbReference type="InterPro" id="IPR049583">
    <property type="entry name" value="BRPF1_PWWP"/>
</dbReference>
<dbReference type="InterPro" id="IPR019542">
    <property type="entry name" value="Enhancer_polycomb-like_N"/>
</dbReference>
<dbReference type="InterPro" id="IPR034732">
    <property type="entry name" value="EPHD"/>
</dbReference>
<dbReference type="InterPro" id="IPR050701">
    <property type="entry name" value="Histone_Mod_Regulator"/>
</dbReference>
<dbReference type="InterPro" id="IPR042061">
    <property type="entry name" value="Peregrin_ePHD"/>
</dbReference>
<dbReference type="InterPro" id="IPR000313">
    <property type="entry name" value="PWWP_dom"/>
</dbReference>
<dbReference type="InterPro" id="IPR019786">
    <property type="entry name" value="Zinc_finger_PHD-type_CS"/>
</dbReference>
<dbReference type="InterPro" id="IPR013087">
    <property type="entry name" value="Znf_C2H2_type"/>
</dbReference>
<dbReference type="InterPro" id="IPR011011">
    <property type="entry name" value="Znf_FYVE_PHD"/>
</dbReference>
<dbReference type="InterPro" id="IPR001965">
    <property type="entry name" value="Znf_PHD"/>
</dbReference>
<dbReference type="InterPro" id="IPR019787">
    <property type="entry name" value="Znf_PHD-finger"/>
</dbReference>
<dbReference type="InterPro" id="IPR013083">
    <property type="entry name" value="Znf_RING/FYVE/PHD"/>
</dbReference>
<dbReference type="PANTHER" id="PTHR13793:SF85">
    <property type="entry name" value="PEREGRIN"/>
    <property type="match status" value="1"/>
</dbReference>
<dbReference type="PANTHER" id="PTHR13793">
    <property type="entry name" value="PHD FINGER PROTEINS"/>
    <property type="match status" value="1"/>
</dbReference>
<dbReference type="Pfam" id="PF00439">
    <property type="entry name" value="Bromodomain"/>
    <property type="match status" value="1"/>
</dbReference>
<dbReference type="Pfam" id="PF10513">
    <property type="entry name" value="EPL1"/>
    <property type="match status" value="1"/>
</dbReference>
<dbReference type="Pfam" id="PF13831">
    <property type="entry name" value="PHD_2"/>
    <property type="match status" value="1"/>
</dbReference>
<dbReference type="Pfam" id="PF00855">
    <property type="entry name" value="PWWP"/>
    <property type="match status" value="1"/>
</dbReference>
<dbReference type="Pfam" id="PF13832">
    <property type="entry name" value="zf-HC5HC2H_2"/>
    <property type="match status" value="1"/>
</dbReference>
<dbReference type="PRINTS" id="PR00503">
    <property type="entry name" value="BROMODOMAIN"/>
</dbReference>
<dbReference type="SMART" id="SM00297">
    <property type="entry name" value="BROMO"/>
    <property type="match status" value="1"/>
</dbReference>
<dbReference type="SMART" id="SM00249">
    <property type="entry name" value="PHD"/>
    <property type="match status" value="2"/>
</dbReference>
<dbReference type="SMART" id="SM00293">
    <property type="entry name" value="PWWP"/>
    <property type="match status" value="1"/>
</dbReference>
<dbReference type="SUPFAM" id="SSF47370">
    <property type="entry name" value="Bromodomain"/>
    <property type="match status" value="1"/>
</dbReference>
<dbReference type="SUPFAM" id="SSF57903">
    <property type="entry name" value="FYVE/PHD zinc finger"/>
    <property type="match status" value="1"/>
</dbReference>
<dbReference type="SUPFAM" id="SSF63748">
    <property type="entry name" value="Tudor/PWWP/MBT"/>
    <property type="match status" value="1"/>
</dbReference>
<dbReference type="PROSITE" id="PS00633">
    <property type="entry name" value="BROMODOMAIN_1"/>
    <property type="match status" value="1"/>
</dbReference>
<dbReference type="PROSITE" id="PS50014">
    <property type="entry name" value="BROMODOMAIN_2"/>
    <property type="match status" value="1"/>
</dbReference>
<dbReference type="PROSITE" id="PS51805">
    <property type="entry name" value="EPHD"/>
    <property type="match status" value="1"/>
</dbReference>
<dbReference type="PROSITE" id="PS50812">
    <property type="entry name" value="PWWP"/>
    <property type="match status" value="1"/>
</dbReference>
<dbReference type="PROSITE" id="PS01359">
    <property type="entry name" value="ZF_PHD_1"/>
    <property type="match status" value="1"/>
</dbReference>
<dbReference type="PROSITE" id="PS50016">
    <property type="entry name" value="ZF_PHD_2"/>
    <property type="match status" value="1"/>
</dbReference>
<dbReference type="PROSITE" id="PS00028">
    <property type="entry name" value="ZINC_FINGER_C2H2_1"/>
    <property type="match status" value="1"/>
</dbReference>
<dbReference type="PROSITE" id="PS50157">
    <property type="entry name" value="ZINC_FINGER_C2H2_2"/>
    <property type="match status" value="1"/>
</dbReference>
<comment type="function">
    <text evidence="8 9 12 15">Scaffold subunit of various histone acetyltransferase (HAT) complexes, such as the MOZ/MORF and HBO1 complexes, which have a histone H3 acetyltransferase activity (PubMed:16387653, PubMed:24065767, PubMed:27939640). Plays a key role in HBO1 complex by directing KAT7/HBO1 specificity towards histone H3 'Lys-14' acetylation (H3K14ac) (PubMed:24065767). Some HAT complexes preferentially mediate histone H3 'Lys-23' (H3K23ac) acetylation (PubMed:27939640). Positively regulates the transcription of RUNX1 and RUNX2 (PubMed:18794358).</text>
</comment>
<comment type="subunit">
    <text evidence="8 9 10 11 12 15">Component of some HBO1 complex composed of KAT7/HBO1, MEAF6, ING5, and BRPF1 (PubMed:24065767). Component of the MOZ/MORF complex composed at least of ING5, KAT6A, KAT6B, MEAF6 and one of BRPF1, BRD1/BRPF2 and BRPF3 (PubMed:16387653, PubMed:18794358, PubMed:27939640). Interacts (via PHD-type zinc finger domains) with unmethylated histone H3 at 'Lys-4' (H3K4me0) (PubMed:24065767). Interacts with trimethylated 'Lys-36' of histone H3 (H3K36me3) (PubMed:20400950, PubMed:21720545). Interacts with ING5; interaction directs BRPF1 to H4K4me3-enriched chromatin at the 5' of active genes (PubMed:24065767). Interacts with KAT7 (PubMed:27939640).</text>
</comment>
<comment type="interaction">
    <interactant intactId="EBI-2837428">
        <id>P55201</id>
    </interactant>
    <interactant intactId="EBI-1390628">
        <id>P0C0S8</id>
        <label>H2AC17</label>
    </interactant>
    <organismsDiffer>false</organismsDiffer>
    <experiments>8</experiments>
</comment>
<comment type="interaction">
    <interactant intactId="EBI-2837428">
        <id>P55201</id>
    </interactant>
    <interactant intactId="EBI-302023">
        <id>P62805</id>
        <label>H4C9</label>
    </interactant>
    <organismsDiffer>false</organismsDiffer>
    <experiments>8</experiments>
</comment>
<comment type="interaction">
    <interactant intactId="EBI-12065306">
        <id>P55201-2</id>
    </interactant>
    <interactant intactId="EBI-5278764">
        <id>Q96GN5</id>
        <label>CDCA7L</label>
    </interactant>
    <organismsDiffer>false</organismsDiffer>
    <experiments>3</experiments>
</comment>
<comment type="interaction">
    <interactant intactId="EBI-12065306">
        <id>P55201-2</id>
    </interactant>
    <interactant intactId="EBI-11522539">
        <id>Q96MT8-3</id>
        <label>CEP63</label>
    </interactant>
    <organismsDiffer>false</organismsDiffer>
    <experiments>3</experiments>
</comment>
<comment type="interaction">
    <interactant intactId="EBI-12065306">
        <id>P55201-2</id>
    </interactant>
    <interactant intactId="EBI-739624">
        <id>Q8NHQ1</id>
        <label>CEP70</label>
    </interactant>
    <organismsDiffer>false</organismsDiffer>
    <experiments>3</experiments>
</comment>
<comment type="interaction">
    <interactant intactId="EBI-12065306">
        <id>P55201-2</id>
    </interactant>
    <interactant intactId="EBI-488533">
        <id>Q8WYH8</id>
        <label>ING5</label>
    </interactant>
    <organismsDiffer>false</organismsDiffer>
    <experiments>3</experiments>
</comment>
<comment type="interaction">
    <interactant intactId="EBI-12065306">
        <id>P55201-2</id>
    </interactant>
    <interactant intactId="EBI-2805604">
        <id>Q2KHM9</id>
        <label>KIAA0753</label>
    </interactant>
    <organismsDiffer>false</organismsDiffer>
    <experiments>3</experiments>
</comment>
<comment type="interaction">
    <interactant intactId="EBI-12065306">
        <id>P55201-2</id>
    </interactant>
    <interactant intactId="EBI-11956853">
        <id>Q8N987</id>
        <label>NECAB1</label>
    </interactant>
    <organismsDiffer>false</organismsDiffer>
    <experiments>3</experiments>
</comment>
<comment type="interaction">
    <interactant intactId="EBI-12065306">
        <id>P55201-2</id>
    </interactant>
    <interactant intactId="EBI-739895">
        <id>Q8N6Y0</id>
        <label>USHBP1</label>
    </interactant>
    <organismsDiffer>false</organismsDiffer>
    <experiments>3</experiments>
</comment>
<comment type="interaction">
    <interactant intactId="EBI-12065306">
        <id>P55201-2</id>
    </interactant>
    <interactant intactId="EBI-2511991">
        <id>Q9Y2K6</id>
        <label>USP20</label>
    </interactant>
    <organismsDiffer>false</organismsDiffer>
    <experiments>3</experiments>
</comment>
<comment type="subcellular location">
    <subcellularLocation>
        <location evidence="9 12 13 15">Nucleus</location>
    </subcellularLocation>
    <subcellularLocation>
        <location evidence="12">Chromosome</location>
    </subcellularLocation>
    <subcellularLocation>
        <location evidence="9 15">Cytoplasm</location>
    </subcellularLocation>
    <text evidence="9 12 15">Localization to the nucleus depends on KAT6A, ING5 and MEAF6 (PubMed:18794358, PubMed:27939640). Localizes to transcription start sites (PubMed:24065767).</text>
</comment>
<comment type="alternative products">
    <event type="alternative splicing"/>
    <isoform>
        <id>P55201-1</id>
        <name>1</name>
        <sequence type="displayed"/>
    </isoform>
    <isoform>
        <id>P55201-2</id>
        <name>2</name>
        <sequence type="described" ref="VSP_037955"/>
    </isoform>
    <isoform>
        <id>P55201-3</id>
        <name>3</name>
        <sequence type="described" ref="VSP_037956"/>
    </isoform>
    <isoform>
        <id>P55201-4</id>
        <name>4</name>
        <sequence type="described" ref="VSP_037957"/>
    </isoform>
</comment>
<comment type="tissue specificity">
    <text evidence="16">High levels in testis.</text>
</comment>
<comment type="PTM">
    <text evidence="9">Acetylated by KAT6A.</text>
</comment>
<comment type="disease" evidence="14 15">
    <disease id="DI-04946">
        <name>Intellectual developmental disorder with dysmorphic facies and ptosis</name>
        <acronym>IDDDFP</acronym>
        <description>An autosomal dominant neurodevelopmental disorder characterized by delayed psychomotor development, intellectual disability, delayed language, and facial dysmorphisms, most notably ptosis. Additional features may include poor growth, hypotonia, and seizures.</description>
        <dbReference type="MIM" id="617333"/>
    </disease>
    <text>The disease is caused by variants affecting the gene represented in this entry.</text>
</comment>
<organism>
    <name type="scientific">Homo sapiens</name>
    <name type="common">Human</name>
    <dbReference type="NCBI Taxonomy" id="9606"/>
    <lineage>
        <taxon>Eukaryota</taxon>
        <taxon>Metazoa</taxon>
        <taxon>Chordata</taxon>
        <taxon>Craniata</taxon>
        <taxon>Vertebrata</taxon>
        <taxon>Euteleostomi</taxon>
        <taxon>Mammalia</taxon>
        <taxon>Eutheria</taxon>
        <taxon>Euarchontoglires</taxon>
        <taxon>Primates</taxon>
        <taxon>Haplorrhini</taxon>
        <taxon>Catarrhini</taxon>
        <taxon>Hominidae</taxon>
        <taxon>Homo</taxon>
    </lineage>
</organism>
<sequence length="1214" mass="137499">MGVDFDVKTFCHNLRATKPPYECPVETCRKVYKSYSGIEYHLYHYDHDNPPPPQQTPLRKHKKKGRQSRPANKQSPSPSEVSQSPGREVMSYAQAQRMVEVDLHGRVHRISIFDNLDVVSEDEEAPEEAPENGSNKENTETPAATPKSGKHKNKEKRKDSNHHHHHNVSASTTPKLPEVVYRELEQDTPDAPPRPTSYYRYIEKSAEELDEEVEYDMDEEDYIWLDIMNERRKTEGVSPIPQEIFEYLMDRLEKESYFESHNKGDPNALVDEDAVCCICNDGECQNSNVILFCDMCNLAVHQECYGVPYIPEGQWLCRRCLQSPSRAVDCALCPNKGGAFKQTDDGRWAHVVCALWIPEVCFANTVFLEPIDSIEHIPPARWKLTCYICKQRGSGACIQCHKANCYTAFHVTCAQQAGLYMKMEPVRETGANGTSFSVRKTAYCDIHTPPGSARRLPALSHSEGEEDEDEEEDEGKGWSSEKVKKAKAKSRIKMKKARKILAEKRAAAPVVSVPCIPPHRLSKITNRLTIQRKSQFMQRLHSYWTLKRQSRNGVPLLRRLQTHLQSQRNCDQVGRDSEDKNWALKEQLKSWQRLRHDLERARLLVELIRKREKLKRETIKVQQIAMEMQLTPFLILLRKTLEQLQEKDTGNIFSEPVPLSEVPDYLDHIKKPMDFFTMKQNLEAYRYLNFDDFEEDFNLIVSNCLKYNAKDTIFYRAAVRLREQGGAVLRQARRQAEKMGIDFETGMHIPHSLAGDEATHHTEDAAEEERLVLLENQKHLPVEEQLKLLLERLDEVNASKQSVGRSRRAKMIKKEMTALRRKLAHQRETGRDGPERHGPSSRGSLTPHPAACDKDGQTDSAAEESSSQETSKGLGPNMSSTPAHEVGRRTSVLFSKKNPKTAGPPKRPGRPPKNRESQMTPSHGGSPVGPPQLPIMSSLRQRKRGRSPRPSSSSDSDSDKSTEDPPMDLPANGFSGGNQPVKKSFLVYRNDCSLPRSSSDSESSSSSSSSAASDRTSTTPSKQGRGKPSFSRGTFPEDSSEDTSGTENEAYSVGTGRGVGHSMVRKSLGRGAGWLSEDEDSPLDALDLVWAKCRGYPSYPALIIDPKMPREGMFHHGVPIPVPPLEVLKLGEQMTQEAREHLYLVLFFDNKRTWQWLPRTKLVPLGVNQDLDKEKMLEGRKSNIRKSVQIAYHRALQHRSKVQGEQSSETSDSD</sequence>
<protein>
    <recommendedName>
        <fullName evidence="21">Peregrin</fullName>
    </recommendedName>
    <alternativeName>
        <fullName evidence="22">Bromodomain and PHD finger-containing protein 1</fullName>
    </alternativeName>
    <alternativeName>
        <fullName evidence="20">Protein Br140</fullName>
    </alternativeName>
</protein>
<name>BRPF1_HUMAN</name>
<proteinExistence type="evidence at protein level"/>
<feature type="chain" id="PRO_0000211187" description="Peregrin">
    <location>
        <begin position="1"/>
        <end position="1214"/>
    </location>
</feature>
<feature type="domain" description="Bromo" evidence="2">
    <location>
        <begin position="628"/>
        <end position="732"/>
    </location>
</feature>
<feature type="domain" description="PWWP" evidence="5">
    <location>
        <begin position="1085"/>
        <end position="1168"/>
    </location>
</feature>
<feature type="zinc finger region" description="C2H2-type" evidence="3">
    <location>
        <begin position="21"/>
        <end position="47"/>
    </location>
</feature>
<feature type="zinc finger region" description="PHD-type 1" evidence="4">
    <location>
        <begin position="273"/>
        <end position="323"/>
    </location>
</feature>
<feature type="zinc finger region" description="C2HC pre-PHD-type" evidence="6">
    <location>
        <begin position="327"/>
        <end position="360"/>
    </location>
</feature>
<feature type="zinc finger region" description="PHD-type 2" evidence="6">
    <location>
        <begin position="384"/>
        <end position="448"/>
    </location>
</feature>
<feature type="region of interest" description="Disordered" evidence="7">
    <location>
        <begin position="43"/>
        <end position="87"/>
    </location>
</feature>
<feature type="region of interest" description="Interaction with KAT6A and KAT6B" evidence="9">
    <location>
        <begin position="59"/>
        <end position="222"/>
    </location>
</feature>
<feature type="region of interest" description="Disordered" evidence="7">
    <location>
        <begin position="118"/>
        <end position="177"/>
    </location>
</feature>
<feature type="region of interest" description="Disordered" evidence="7">
    <location>
        <begin position="448"/>
        <end position="489"/>
    </location>
</feature>
<feature type="region of interest" description="Interaction with MEAF6 and ING5" evidence="9">
    <location>
        <begin position="501"/>
        <end position="821"/>
    </location>
</feature>
<feature type="region of interest" description="Required for RUNX1 and RUNX2 transcriptional activation">
    <location>
        <begin position="543"/>
        <end position="1079"/>
    </location>
</feature>
<feature type="region of interest" description="Disordered" evidence="7">
    <location>
        <begin position="819"/>
        <end position="1062"/>
    </location>
</feature>
<feature type="compositionally biased region" description="Basic residues" evidence="7">
    <location>
        <begin position="58"/>
        <end position="67"/>
    </location>
</feature>
<feature type="compositionally biased region" description="Low complexity" evidence="7">
    <location>
        <begin position="74"/>
        <end position="85"/>
    </location>
</feature>
<feature type="compositionally biased region" description="Acidic residues" evidence="7">
    <location>
        <begin position="119"/>
        <end position="130"/>
    </location>
</feature>
<feature type="compositionally biased region" description="Basic residues" evidence="7">
    <location>
        <begin position="148"/>
        <end position="167"/>
    </location>
</feature>
<feature type="compositionally biased region" description="Acidic residues" evidence="7">
    <location>
        <begin position="464"/>
        <end position="474"/>
    </location>
</feature>
<feature type="compositionally biased region" description="Basic and acidic residues" evidence="7">
    <location>
        <begin position="825"/>
        <end position="838"/>
    </location>
</feature>
<feature type="compositionally biased region" description="Low complexity" evidence="7">
    <location>
        <begin position="858"/>
        <end position="871"/>
    </location>
</feature>
<feature type="compositionally biased region" description="Low complexity" evidence="7">
    <location>
        <begin position="993"/>
        <end position="1021"/>
    </location>
</feature>
<feature type="modified residue" description="Phosphoserine" evidence="24">
    <location>
        <position position="120"/>
    </location>
</feature>
<feature type="modified residue" description="N6-acetyllysine" evidence="1">
    <location>
        <position position="147"/>
    </location>
</feature>
<feature type="modified residue" description="Phosphoserine" evidence="29">
    <location>
        <position position="238"/>
    </location>
</feature>
<feature type="modified residue" description="Phosphoserine" evidence="23 26 27 28">
    <location>
        <position position="460"/>
    </location>
</feature>
<feature type="modified residue" description="Phosphoserine" evidence="23 26 27 28">
    <location>
        <position position="462"/>
    </location>
</feature>
<feature type="modified residue" description="N6-acetyllysine" evidence="1">
    <location>
        <position position="580"/>
    </location>
</feature>
<feature type="modified residue" description="Phosphothreonine" evidence="1">
    <location>
        <position position="858"/>
    </location>
</feature>
<feature type="modified residue" description="Phosphoserine" evidence="27">
    <location>
        <position position="860"/>
    </location>
</feature>
<feature type="modified residue" description="Phosphoserine" evidence="1">
    <location>
        <position position="917"/>
    </location>
</feature>
<feature type="modified residue" description="Phosphoserine" evidence="1">
    <location>
        <position position="922"/>
    </location>
</feature>
<feature type="modified residue" description="Phosphoserine" evidence="1">
    <location>
        <position position="926"/>
    </location>
</feature>
<feature type="modified residue" description="Phosphoserine" evidence="25 26 27">
    <location>
        <position position="1076"/>
    </location>
</feature>
<feature type="modified residue" description="Phosphoserine" evidence="24">
    <location>
        <position position="1187"/>
    </location>
</feature>
<feature type="splice variant" id="VSP_037955" description="In isoform 2." evidence="18">
    <original>S</original>
    <variation>SEVTELD</variation>
    <location>
        <position position="660"/>
    </location>
</feature>
<feature type="splice variant" id="VSP_037956" description="In isoform 3." evidence="19">
    <location>
        <position position="765"/>
    </location>
</feature>
<feature type="splice variant" id="VSP_037957" description="In isoform 4." evidence="17">
    <location>
        <begin position="873"/>
        <end position="967"/>
    </location>
</feature>
<feature type="sequence variant" id="VAR_078076" description="In IDDDFP." evidence="14">
    <location>
        <begin position="35"/>
        <end position="1214"/>
    </location>
</feature>
<feature type="sequence variant" id="VAR_078077" description="In IDDDFP; decreased histone H3-K23 acetylation; changed cytoplasmic localization; no effect on expression and assembly of the MOZ/MORF complex; dbSNP:rs1057519509." evidence="15">
    <original>P</original>
    <variation>S</variation>
    <location>
        <position position="370"/>
    </location>
</feature>
<feature type="sequence variant" id="VAR_078078" description="In IDDDFP; dbSNP:rs1057519515." evidence="14">
    <original>C</original>
    <variation>R</variation>
    <location>
        <position position="389"/>
    </location>
</feature>
<feature type="sequence variant" id="VAR_078079" description="In IDDDFP; decreased histone H3-K23 acetylation; increased localization to the nucleus; decreased expression and assembly of the MOZ/MORF complex." evidence="15">
    <location>
        <begin position="455"/>
        <end position="1214"/>
    </location>
</feature>
<feature type="sequence variant" id="VAR_078080" description="In IDDDFP; no effect on histone H3-K23 acetylation; increased aggregation in the cytoplasm; no effect on expression and assembly of the MOZ/MORF complex." evidence="15">
    <location>
        <begin position="833"/>
        <end position="1214"/>
    </location>
</feature>
<feature type="sequence variant" id="VAR_078081" description="In IDDDFP." evidence="14">
    <location>
        <begin position="988"/>
        <end position="1214"/>
    </location>
</feature>
<feature type="sequence variant" id="VAR_078082" description="In IDDDFP; no effect on histone H3-K23 acetylation; no effect on expression and assembly of the MOZ/MORF complex." evidence="15">
    <location>
        <begin position="1100"/>
        <end position="1214"/>
    </location>
</feature>
<feature type="sequence variant" id="VAR_028232" description="In dbSNP:rs1042294.">
    <original>G</original>
    <variation>E</variation>
    <location>
        <position position="1117"/>
    </location>
</feature>
<feature type="sequence variant" id="VAR_048430" description="In dbSNP:rs36081837.">
    <original>H</original>
    <variation>Q</variation>
    <location>
        <position position="1193"/>
    </location>
</feature>
<feature type="sequence conflict" description="In Ref. 3; BAG57257." evidence="21" ref="3">
    <original>F</original>
    <variation>L</variation>
    <location>
        <position position="5"/>
    </location>
</feature>
<feature type="sequence conflict" description="In Ref. 1; AAB02119." evidence="21" ref="1">
    <original>A</original>
    <variation>E</variation>
    <location>
        <position position="299"/>
    </location>
</feature>
<feature type="sequence conflict" description="In Ref. 3; BAG57257." evidence="21" ref="3">
    <original>G</original>
    <variation>D</variation>
    <location>
        <position position="306"/>
    </location>
</feature>
<feature type="sequence conflict" description="In Ref. 3; BAG57257." evidence="21" ref="3">
    <original>K</original>
    <variation>R</variation>
    <location>
        <position position="341"/>
    </location>
</feature>
<feature type="sequence conflict" description="In Ref. 1; AAB02119." evidence="21" ref="1">
    <original>L</original>
    <variation>V</variation>
    <location>
        <position position="729"/>
    </location>
</feature>
<feature type="sequence conflict" description="In Ref. 3; BAG57257." evidence="21" ref="3">
    <original>F</original>
    <variation>S</variation>
    <location>
        <position position="1035"/>
    </location>
</feature>
<feature type="turn" evidence="32">
    <location>
        <begin position="277"/>
        <end position="279"/>
    </location>
</feature>
<feature type="strand" evidence="32">
    <location>
        <begin position="286"/>
        <end position="288"/>
    </location>
</feature>
<feature type="strand" evidence="32">
    <location>
        <begin position="290"/>
        <end position="292"/>
    </location>
</feature>
<feature type="turn" evidence="32">
    <location>
        <begin position="294"/>
        <end position="296"/>
    </location>
</feature>
<feature type="strand" evidence="32">
    <location>
        <begin position="299"/>
        <end position="301"/>
    </location>
</feature>
<feature type="helix" evidence="32">
    <location>
        <begin position="302"/>
        <end position="305"/>
    </location>
</feature>
<feature type="helix" evidence="32">
    <location>
        <begin position="318"/>
        <end position="321"/>
    </location>
</feature>
<feature type="strand" evidence="32">
    <location>
        <begin position="324"/>
        <end position="326"/>
    </location>
</feature>
<feature type="strand" evidence="32">
    <location>
        <begin position="340"/>
        <end position="343"/>
    </location>
</feature>
<feature type="strand" evidence="32">
    <location>
        <begin position="348"/>
        <end position="350"/>
    </location>
</feature>
<feature type="helix" evidence="32">
    <location>
        <begin position="351"/>
        <end position="356"/>
    </location>
</feature>
<feature type="strand" evidence="32">
    <location>
        <begin position="361"/>
        <end position="364"/>
    </location>
</feature>
<feature type="turn" evidence="32">
    <location>
        <begin position="365"/>
        <end position="368"/>
    </location>
</feature>
<feature type="strand" evidence="32">
    <location>
        <begin position="369"/>
        <end position="372"/>
    </location>
</feature>
<feature type="helix" evidence="32">
    <location>
        <begin position="374"/>
        <end position="376"/>
    </location>
</feature>
<feature type="helix" evidence="32">
    <location>
        <begin position="380"/>
        <end position="383"/>
    </location>
</feature>
<feature type="strand" evidence="37">
    <location>
        <begin position="384"/>
        <end position="386"/>
    </location>
</feature>
<feature type="turn" evidence="32">
    <location>
        <begin position="387"/>
        <end position="389"/>
    </location>
</feature>
<feature type="strand" evidence="32">
    <location>
        <begin position="392"/>
        <end position="395"/>
    </location>
</feature>
<feature type="helix" evidence="32">
    <location>
        <begin position="411"/>
        <end position="416"/>
    </location>
</feature>
<feature type="strand" evidence="32">
    <location>
        <begin position="420"/>
        <end position="424"/>
    </location>
</feature>
<feature type="strand" evidence="32">
    <location>
        <begin position="439"/>
        <end position="443"/>
    </location>
</feature>
<feature type="helix" evidence="35">
    <location>
        <begin position="625"/>
        <end position="627"/>
    </location>
</feature>
<feature type="helix" evidence="36">
    <location>
        <begin position="630"/>
        <end position="647"/>
    </location>
</feature>
<feature type="strand" evidence="33">
    <location>
        <begin position="653"/>
        <end position="655"/>
    </location>
</feature>
<feature type="helix" evidence="36">
    <location>
        <begin position="659"/>
        <end position="661"/>
    </location>
</feature>
<feature type="helix" evidence="36">
    <location>
        <begin position="665"/>
        <end position="668"/>
    </location>
</feature>
<feature type="helix" evidence="36">
    <location>
        <begin position="675"/>
        <end position="683"/>
    </location>
</feature>
<feature type="helix" evidence="36">
    <location>
        <begin position="690"/>
        <end position="707"/>
    </location>
</feature>
<feature type="strand" evidence="34">
    <location>
        <begin position="710"/>
        <end position="712"/>
    </location>
</feature>
<feature type="helix" evidence="36">
    <location>
        <begin position="713"/>
        <end position="737"/>
    </location>
</feature>
<feature type="strand" evidence="30">
    <location>
        <begin position="1081"/>
        <end position="1083"/>
    </location>
</feature>
<feature type="strand" evidence="30">
    <location>
        <begin position="1088"/>
        <end position="1091"/>
    </location>
</feature>
<feature type="strand" evidence="30">
    <location>
        <begin position="1099"/>
        <end position="1104"/>
    </location>
</feature>
<feature type="strand" evidence="30">
    <location>
        <begin position="1113"/>
        <end position="1115"/>
    </location>
</feature>
<feature type="strand" evidence="30">
    <location>
        <begin position="1118"/>
        <end position="1120"/>
    </location>
</feature>
<feature type="helix" evidence="30">
    <location>
        <begin position="1125"/>
        <end position="1137"/>
    </location>
</feature>
<feature type="strand" evidence="31">
    <location>
        <begin position="1138"/>
        <end position="1140"/>
    </location>
</feature>
<feature type="strand" evidence="30">
    <location>
        <begin position="1142"/>
        <end position="1149"/>
    </location>
</feature>
<feature type="strand" evidence="30">
    <location>
        <begin position="1154"/>
        <end position="1158"/>
    </location>
</feature>
<feature type="helix" evidence="30">
    <location>
        <begin position="1159"/>
        <end position="1161"/>
    </location>
</feature>
<feature type="strand" evidence="30">
    <location>
        <begin position="1162"/>
        <end position="1167"/>
    </location>
</feature>
<feature type="helix" evidence="30">
    <location>
        <begin position="1169"/>
        <end position="1176"/>
    </location>
</feature>
<feature type="helix" evidence="30">
    <location>
        <begin position="1182"/>
        <end position="1202"/>
    </location>
</feature>
<accession>P55201</accession>
<accession>B4DEZ6</accession>
<accession>Q7Z6E0</accession>
<accession>Q8TCM6</accession>
<accession>Q9UHI0</accession>